<organism>
    <name type="scientific">Yersinia pseudotuberculosis serotype O:1b (strain IP 31758)</name>
    <dbReference type="NCBI Taxonomy" id="349747"/>
    <lineage>
        <taxon>Bacteria</taxon>
        <taxon>Pseudomonadati</taxon>
        <taxon>Pseudomonadota</taxon>
        <taxon>Gammaproteobacteria</taxon>
        <taxon>Enterobacterales</taxon>
        <taxon>Yersiniaceae</taxon>
        <taxon>Yersinia</taxon>
    </lineage>
</organism>
<keyword id="KW-0274">FAD</keyword>
<keyword id="KW-0285">Flavoprotein</keyword>
<keyword id="KW-0560">Oxidoreductase</keyword>
<gene>
    <name evidence="1" type="primary">solA</name>
    <name type="ordered locus">YpsIP31758_1564</name>
</gene>
<proteinExistence type="inferred from homology"/>
<reference key="1">
    <citation type="journal article" date="2007" name="PLoS Genet.">
        <title>The complete genome sequence of Yersinia pseudotuberculosis IP31758, the causative agent of Far East scarlet-like fever.</title>
        <authorList>
            <person name="Eppinger M."/>
            <person name="Rosovitz M.J."/>
            <person name="Fricke W.F."/>
            <person name="Rasko D.A."/>
            <person name="Kokorina G."/>
            <person name="Fayolle C."/>
            <person name="Lindler L.E."/>
            <person name="Carniel E."/>
            <person name="Ravel J."/>
        </authorList>
    </citation>
    <scope>NUCLEOTIDE SEQUENCE [LARGE SCALE GENOMIC DNA]</scope>
    <source>
        <strain>IP 31758</strain>
    </source>
</reference>
<accession>A7FH13</accession>
<feature type="chain" id="PRO_1000060898" description="N-methyl-L-tryptophan oxidase">
    <location>
        <begin position="1"/>
        <end position="371"/>
    </location>
</feature>
<feature type="binding site" evidence="1">
    <location>
        <begin position="4"/>
        <end position="34"/>
    </location>
    <ligand>
        <name>FAD</name>
        <dbReference type="ChEBI" id="CHEBI:57692"/>
    </ligand>
</feature>
<feature type="modified residue" description="S-8alpha-FAD cysteine" evidence="1">
    <location>
        <position position="307"/>
    </location>
</feature>
<comment type="function">
    <text evidence="1">Catalyzes the oxidative demethylation of N-methyl-L-tryptophan.</text>
</comment>
<comment type="catalytic activity">
    <reaction evidence="1">
        <text>N(alpha)-methyl-L-tryptophan + O2 + H2O = L-tryptophan + formaldehyde + H2O2</text>
        <dbReference type="Rhea" id="RHEA:28006"/>
        <dbReference type="ChEBI" id="CHEBI:15377"/>
        <dbReference type="ChEBI" id="CHEBI:15379"/>
        <dbReference type="ChEBI" id="CHEBI:16240"/>
        <dbReference type="ChEBI" id="CHEBI:16842"/>
        <dbReference type="ChEBI" id="CHEBI:57283"/>
        <dbReference type="ChEBI" id="CHEBI:57912"/>
    </reaction>
</comment>
<comment type="cofactor">
    <cofactor evidence="1">
        <name>FAD</name>
        <dbReference type="ChEBI" id="CHEBI:57692"/>
    </cofactor>
    <text evidence="1">Binds 1 FAD per subunit.</text>
</comment>
<comment type="subunit">
    <text evidence="1">Monomer.</text>
</comment>
<comment type="similarity">
    <text evidence="1">Belongs to the MSOX/MTOX family. MTOX subfamily.</text>
</comment>
<protein>
    <recommendedName>
        <fullName evidence="1">N-methyl-L-tryptophan oxidase</fullName>
        <shortName evidence="1">MTOX</shortName>
        <ecNumber evidence="1">1.5.3.-</ecNumber>
    </recommendedName>
</protein>
<dbReference type="EC" id="1.5.3.-" evidence="1"/>
<dbReference type="EMBL" id="CP000720">
    <property type="protein sequence ID" value="ABS48667.1"/>
    <property type="molecule type" value="Genomic_DNA"/>
</dbReference>
<dbReference type="RefSeq" id="WP_002211850.1">
    <property type="nucleotide sequence ID" value="NC_009708.1"/>
</dbReference>
<dbReference type="SMR" id="A7FH13"/>
<dbReference type="GeneID" id="57976231"/>
<dbReference type="KEGG" id="ypi:YpsIP31758_1564"/>
<dbReference type="HOGENOM" id="CLU_007884_2_1_6"/>
<dbReference type="Proteomes" id="UP000002412">
    <property type="component" value="Chromosome"/>
</dbReference>
<dbReference type="GO" id="GO:0005829">
    <property type="term" value="C:cytosol"/>
    <property type="evidence" value="ECO:0007669"/>
    <property type="project" value="TreeGrafter"/>
</dbReference>
<dbReference type="GO" id="GO:0050660">
    <property type="term" value="F:flavin adenine dinucleotide binding"/>
    <property type="evidence" value="ECO:0007669"/>
    <property type="project" value="InterPro"/>
</dbReference>
<dbReference type="GO" id="GO:0050131">
    <property type="term" value="F:N-methyl-L-amino-acid oxidase activity"/>
    <property type="evidence" value="ECO:0007669"/>
    <property type="project" value="InterPro"/>
</dbReference>
<dbReference type="GO" id="GO:0008115">
    <property type="term" value="F:sarcosine oxidase activity"/>
    <property type="evidence" value="ECO:0007669"/>
    <property type="project" value="TreeGrafter"/>
</dbReference>
<dbReference type="Gene3D" id="3.30.9.10">
    <property type="entry name" value="D-Amino Acid Oxidase, subunit A, domain 2"/>
    <property type="match status" value="1"/>
</dbReference>
<dbReference type="Gene3D" id="3.50.50.60">
    <property type="entry name" value="FAD/NAD(P)-binding domain"/>
    <property type="match status" value="1"/>
</dbReference>
<dbReference type="HAMAP" id="MF_00515">
    <property type="entry name" value="MTOX"/>
    <property type="match status" value="1"/>
</dbReference>
<dbReference type="InterPro" id="IPR006076">
    <property type="entry name" value="FAD-dep_OxRdtase"/>
</dbReference>
<dbReference type="InterPro" id="IPR036188">
    <property type="entry name" value="FAD/NAD-bd_sf"/>
</dbReference>
<dbReference type="InterPro" id="IPR023493">
    <property type="entry name" value="Me_Trp_Oxase_MTOX"/>
</dbReference>
<dbReference type="InterPro" id="IPR045170">
    <property type="entry name" value="MTOX"/>
</dbReference>
<dbReference type="NCBIfam" id="NF008425">
    <property type="entry name" value="PRK11259.1"/>
    <property type="match status" value="1"/>
</dbReference>
<dbReference type="PANTHER" id="PTHR10961:SF7">
    <property type="entry name" value="FAD DEPENDENT OXIDOREDUCTASE DOMAIN-CONTAINING PROTEIN"/>
    <property type="match status" value="1"/>
</dbReference>
<dbReference type="PANTHER" id="PTHR10961">
    <property type="entry name" value="PEROXISOMAL SARCOSINE OXIDASE"/>
    <property type="match status" value="1"/>
</dbReference>
<dbReference type="Pfam" id="PF01266">
    <property type="entry name" value="DAO"/>
    <property type="match status" value="1"/>
</dbReference>
<dbReference type="SUPFAM" id="SSF54373">
    <property type="entry name" value="FAD-linked reductases, C-terminal domain"/>
    <property type="match status" value="1"/>
</dbReference>
<dbReference type="SUPFAM" id="SSF51905">
    <property type="entry name" value="FAD/NAD(P)-binding domain"/>
    <property type="match status" value="1"/>
</dbReference>
<name>MTOX_YERP3</name>
<sequence length="371" mass="40467">MDYDLIVIGSGSVGSAAGYYASQAGLNVLMIDSAMPPHQAGSHHGETRIMRHAYGEGEKYVPLVLRAQALWDQLAAQTGEKLFQACGVINLGPDNSTFLQNVQRSAQQYDLPVETLNSTQIREKWPVFTVPDNYIAVFEPQSGYLRSELAVKTLIKAVTEAGCGILFNCPVTAIESHQAGVDVVTIDGTYSATKVVVTAGTWVKELLPTLPVTPVRKVFSWHQADGRYSEANHFPAFTVEMPDNILYYGFPAQNDALKLGKHHGGQLIESAAQRKPFGRYAEDGTEVFSFLRHFLPGVGVCLRGEACSYDMSPDEDFIIDTLPEDERVMVVSGLSGHGFKFATALGEVAALFAQDKPSPIDISAFSLARFR</sequence>
<evidence type="ECO:0000255" key="1">
    <source>
        <dbReference type="HAMAP-Rule" id="MF_00515"/>
    </source>
</evidence>